<comment type="function">
    <text evidence="1">Displays ATPase and GTPase activities.</text>
</comment>
<comment type="similarity">
    <text evidence="1">Belongs to the RapZ-like family.</text>
</comment>
<sequence length="296" mass="33587">MSDKHINLVIVTGMSGAGKTVAIQSFEDLGYFTIDNMPPALVPKFLELIEQTNENRRVALVVDMRSRLFFKEINSTLDSIESNPSIDFRILFLDATDGELVSRYKETRRSHPLAADGRVLDGIRLERELLSPLKSMSQHVVDTTKLTPRQLRKTISDQFSEGSNQASFRIEVMSFGFKYGLPLDADLVFDVRFLPNPYYQVELREKTGLDEDVFNYVMSHPESEVFYKHLLNLIVPILPAYQKEGKSVLTVAIGCTGGQHRSVAFAHCLAESLATDWSVNESHRDQNRRKETVNRS</sequence>
<feature type="chain" id="PRO_1000056865" description="Nucleotide-binding protein SpyM51325">
    <location>
        <begin position="1"/>
        <end position="296"/>
    </location>
</feature>
<feature type="binding site" evidence="1">
    <location>
        <begin position="13"/>
        <end position="20"/>
    </location>
    <ligand>
        <name>ATP</name>
        <dbReference type="ChEBI" id="CHEBI:30616"/>
    </ligand>
</feature>
<feature type="binding site" evidence="1">
    <location>
        <begin position="63"/>
        <end position="66"/>
    </location>
    <ligand>
        <name>GTP</name>
        <dbReference type="ChEBI" id="CHEBI:37565"/>
    </ligand>
</feature>
<organism>
    <name type="scientific">Streptococcus pyogenes serotype M5 (strain Manfredo)</name>
    <dbReference type="NCBI Taxonomy" id="160491"/>
    <lineage>
        <taxon>Bacteria</taxon>
        <taxon>Bacillati</taxon>
        <taxon>Bacillota</taxon>
        <taxon>Bacilli</taxon>
        <taxon>Lactobacillales</taxon>
        <taxon>Streptococcaceae</taxon>
        <taxon>Streptococcus</taxon>
    </lineage>
</organism>
<accession>A2RFM4</accession>
<reference key="1">
    <citation type="journal article" date="2007" name="J. Bacteriol.">
        <title>Complete genome of acute rheumatic fever-associated serotype M5 Streptococcus pyogenes strain Manfredo.</title>
        <authorList>
            <person name="Holden M.T.G."/>
            <person name="Scott A."/>
            <person name="Cherevach I."/>
            <person name="Chillingworth T."/>
            <person name="Churcher C."/>
            <person name="Cronin A."/>
            <person name="Dowd L."/>
            <person name="Feltwell T."/>
            <person name="Hamlin N."/>
            <person name="Holroyd S."/>
            <person name="Jagels K."/>
            <person name="Moule S."/>
            <person name="Mungall K."/>
            <person name="Quail M.A."/>
            <person name="Price C."/>
            <person name="Rabbinowitsch E."/>
            <person name="Sharp S."/>
            <person name="Skelton J."/>
            <person name="Whitehead S."/>
            <person name="Barrell B.G."/>
            <person name="Kehoe M."/>
            <person name="Parkhill J."/>
        </authorList>
    </citation>
    <scope>NUCLEOTIDE SEQUENCE [LARGE SCALE GENOMIC DNA]</scope>
    <source>
        <strain>Manfredo</strain>
    </source>
</reference>
<proteinExistence type="inferred from homology"/>
<dbReference type="EMBL" id="AM295007">
    <property type="protein sequence ID" value="CAM30653.1"/>
    <property type="molecule type" value="Genomic_DNA"/>
</dbReference>
<dbReference type="SMR" id="A2RFM4"/>
<dbReference type="KEGG" id="spf:SpyM51325"/>
<dbReference type="HOGENOM" id="CLU_059558_0_0_9"/>
<dbReference type="GO" id="GO:0005524">
    <property type="term" value="F:ATP binding"/>
    <property type="evidence" value="ECO:0007669"/>
    <property type="project" value="UniProtKB-UniRule"/>
</dbReference>
<dbReference type="GO" id="GO:0005525">
    <property type="term" value="F:GTP binding"/>
    <property type="evidence" value="ECO:0007669"/>
    <property type="project" value="UniProtKB-UniRule"/>
</dbReference>
<dbReference type="Gene3D" id="3.40.50.300">
    <property type="entry name" value="P-loop containing nucleotide triphosphate hydrolases"/>
    <property type="match status" value="1"/>
</dbReference>
<dbReference type="HAMAP" id="MF_00636">
    <property type="entry name" value="RapZ_like"/>
    <property type="match status" value="1"/>
</dbReference>
<dbReference type="InterPro" id="IPR027417">
    <property type="entry name" value="P-loop_NTPase"/>
</dbReference>
<dbReference type="InterPro" id="IPR005337">
    <property type="entry name" value="RapZ-like"/>
</dbReference>
<dbReference type="InterPro" id="IPR053930">
    <property type="entry name" value="RapZ-like_N"/>
</dbReference>
<dbReference type="InterPro" id="IPR053931">
    <property type="entry name" value="RapZ_C"/>
</dbReference>
<dbReference type="NCBIfam" id="NF003828">
    <property type="entry name" value="PRK05416.1"/>
    <property type="match status" value="1"/>
</dbReference>
<dbReference type="PANTHER" id="PTHR30448">
    <property type="entry name" value="RNASE ADAPTER PROTEIN RAPZ"/>
    <property type="match status" value="1"/>
</dbReference>
<dbReference type="PANTHER" id="PTHR30448:SF0">
    <property type="entry name" value="RNASE ADAPTER PROTEIN RAPZ"/>
    <property type="match status" value="1"/>
</dbReference>
<dbReference type="Pfam" id="PF22740">
    <property type="entry name" value="PapZ_C"/>
    <property type="match status" value="1"/>
</dbReference>
<dbReference type="Pfam" id="PF03668">
    <property type="entry name" value="RapZ-like_N"/>
    <property type="match status" value="1"/>
</dbReference>
<dbReference type="PIRSF" id="PIRSF005052">
    <property type="entry name" value="P-loopkin"/>
    <property type="match status" value="1"/>
</dbReference>
<dbReference type="SUPFAM" id="SSF52540">
    <property type="entry name" value="P-loop containing nucleoside triphosphate hydrolases"/>
    <property type="match status" value="1"/>
</dbReference>
<evidence type="ECO:0000255" key="1">
    <source>
        <dbReference type="HAMAP-Rule" id="MF_00636"/>
    </source>
</evidence>
<name>Y1325_STRPG</name>
<gene>
    <name type="ordered locus">SpyM51325</name>
</gene>
<protein>
    <recommendedName>
        <fullName evidence="1">Nucleotide-binding protein SpyM51325</fullName>
    </recommendedName>
</protein>
<keyword id="KW-0067">ATP-binding</keyword>
<keyword id="KW-0342">GTP-binding</keyword>
<keyword id="KW-0547">Nucleotide-binding</keyword>